<sequence>MKAVHFGAGNIGRGFIGYILADNNVKVTFADVNEEIINALATGHQYDVILADESKTTTRVNNVAAINSMQPSEELKQAILEADIITTAVGVNILPIIAKSFAPFLKEKTNHVNIVACENAIMATDTLKKAVLDITGPLGNNIHFANSAVDRIVPLQKNENILDVMVEPFYEWVVEKDAWYGPELNHIKYVDDLTPYIERKLLTVNTGHAYLAYAGKFAGKATVLDAVKDSSIEAGLRRVLAETSQYITNEFDFTEAEQAGYVEKIIDRFNNSYLSDEVTRVGRGTLRKIGPKDRIIKPLAYLYNKDLERTGLLNTAALLLKYDDTADQETVEKNNYIKEHGLKAFLSEYAKVDDGLADEIIEAYNSLS</sequence>
<name>MTLD_STAAR</name>
<proteinExistence type="inferred from homology"/>
<dbReference type="EC" id="1.1.1.17" evidence="1"/>
<dbReference type="EMBL" id="BX571856">
    <property type="protein sequence ID" value="CAG41228.1"/>
    <property type="molecule type" value="Genomic_DNA"/>
</dbReference>
<dbReference type="RefSeq" id="WP_000648736.1">
    <property type="nucleotide sequence ID" value="NC_002952.2"/>
</dbReference>
<dbReference type="SMR" id="Q6GER8"/>
<dbReference type="KEGG" id="sar:SAR2247"/>
<dbReference type="HOGENOM" id="CLU_036089_2_0_9"/>
<dbReference type="Proteomes" id="UP000000596">
    <property type="component" value="Chromosome"/>
</dbReference>
<dbReference type="GO" id="GO:0005829">
    <property type="term" value="C:cytosol"/>
    <property type="evidence" value="ECO:0007669"/>
    <property type="project" value="TreeGrafter"/>
</dbReference>
<dbReference type="GO" id="GO:0008926">
    <property type="term" value="F:mannitol-1-phosphate 5-dehydrogenase activity"/>
    <property type="evidence" value="ECO:0007669"/>
    <property type="project" value="UniProtKB-UniRule"/>
</dbReference>
<dbReference type="GO" id="GO:0019592">
    <property type="term" value="P:mannitol catabolic process"/>
    <property type="evidence" value="ECO:0007669"/>
    <property type="project" value="TreeGrafter"/>
</dbReference>
<dbReference type="FunFam" id="3.40.50.720:FF:000316">
    <property type="entry name" value="Mannitol-1-phosphate 5-dehydrogenase"/>
    <property type="match status" value="1"/>
</dbReference>
<dbReference type="Gene3D" id="1.10.1040.10">
    <property type="entry name" value="N-(1-d-carboxylethyl)-l-norvaline Dehydrogenase, domain 2"/>
    <property type="match status" value="1"/>
</dbReference>
<dbReference type="Gene3D" id="3.40.50.720">
    <property type="entry name" value="NAD(P)-binding Rossmann-like Domain"/>
    <property type="match status" value="1"/>
</dbReference>
<dbReference type="HAMAP" id="MF_00196">
    <property type="entry name" value="Mannitol_dehydrog"/>
    <property type="match status" value="1"/>
</dbReference>
<dbReference type="InterPro" id="IPR008927">
    <property type="entry name" value="6-PGluconate_DH-like_C_sf"/>
</dbReference>
<dbReference type="InterPro" id="IPR013328">
    <property type="entry name" value="6PGD_dom2"/>
</dbReference>
<dbReference type="InterPro" id="IPR023028">
    <property type="entry name" value="Mannitol_1_phos_5_DH"/>
</dbReference>
<dbReference type="InterPro" id="IPR000669">
    <property type="entry name" value="Mannitol_DH"/>
</dbReference>
<dbReference type="InterPro" id="IPR013118">
    <property type="entry name" value="Mannitol_DH_C"/>
</dbReference>
<dbReference type="InterPro" id="IPR023027">
    <property type="entry name" value="Mannitol_DH_CS"/>
</dbReference>
<dbReference type="InterPro" id="IPR013131">
    <property type="entry name" value="Mannitol_DH_N"/>
</dbReference>
<dbReference type="InterPro" id="IPR036291">
    <property type="entry name" value="NAD(P)-bd_dom_sf"/>
</dbReference>
<dbReference type="NCBIfam" id="NF002645">
    <property type="entry name" value="PRK02318.1-1"/>
    <property type="match status" value="1"/>
</dbReference>
<dbReference type="NCBIfam" id="NF002652">
    <property type="entry name" value="PRK02318.2-5"/>
    <property type="match status" value="1"/>
</dbReference>
<dbReference type="PANTHER" id="PTHR30524:SF0">
    <property type="entry name" value="ALTRONATE OXIDOREDUCTASE-RELATED"/>
    <property type="match status" value="1"/>
</dbReference>
<dbReference type="PANTHER" id="PTHR30524">
    <property type="entry name" value="MANNITOL-1-PHOSPHATE 5-DEHYDROGENASE"/>
    <property type="match status" value="1"/>
</dbReference>
<dbReference type="Pfam" id="PF01232">
    <property type="entry name" value="Mannitol_dh"/>
    <property type="match status" value="1"/>
</dbReference>
<dbReference type="Pfam" id="PF08125">
    <property type="entry name" value="Mannitol_dh_C"/>
    <property type="match status" value="1"/>
</dbReference>
<dbReference type="PRINTS" id="PR00084">
    <property type="entry name" value="MTLDHDRGNASE"/>
</dbReference>
<dbReference type="SUPFAM" id="SSF48179">
    <property type="entry name" value="6-phosphogluconate dehydrogenase C-terminal domain-like"/>
    <property type="match status" value="1"/>
</dbReference>
<dbReference type="SUPFAM" id="SSF51735">
    <property type="entry name" value="NAD(P)-binding Rossmann-fold domains"/>
    <property type="match status" value="1"/>
</dbReference>
<dbReference type="PROSITE" id="PS00974">
    <property type="entry name" value="MANNITOL_DHGENASE"/>
    <property type="match status" value="1"/>
</dbReference>
<feature type="chain" id="PRO_0000170722" description="Mannitol-1-phosphate 5-dehydrogenase">
    <location>
        <begin position="1"/>
        <end position="368"/>
    </location>
</feature>
<feature type="binding site" evidence="1">
    <location>
        <begin position="3"/>
        <end position="14"/>
    </location>
    <ligand>
        <name>NAD(+)</name>
        <dbReference type="ChEBI" id="CHEBI:57540"/>
    </ligand>
</feature>
<keyword id="KW-0520">NAD</keyword>
<keyword id="KW-0560">Oxidoreductase</keyword>
<reference key="1">
    <citation type="journal article" date="2004" name="Proc. Natl. Acad. Sci. U.S.A.">
        <title>Complete genomes of two clinical Staphylococcus aureus strains: evidence for the rapid evolution of virulence and drug resistance.</title>
        <authorList>
            <person name="Holden M.T.G."/>
            <person name="Feil E.J."/>
            <person name="Lindsay J.A."/>
            <person name="Peacock S.J."/>
            <person name="Day N.P.J."/>
            <person name="Enright M.C."/>
            <person name="Foster T.J."/>
            <person name="Moore C.E."/>
            <person name="Hurst L."/>
            <person name="Atkin R."/>
            <person name="Barron A."/>
            <person name="Bason N."/>
            <person name="Bentley S.D."/>
            <person name="Chillingworth C."/>
            <person name="Chillingworth T."/>
            <person name="Churcher C."/>
            <person name="Clark L."/>
            <person name="Corton C."/>
            <person name="Cronin A."/>
            <person name="Doggett J."/>
            <person name="Dowd L."/>
            <person name="Feltwell T."/>
            <person name="Hance Z."/>
            <person name="Harris B."/>
            <person name="Hauser H."/>
            <person name="Holroyd S."/>
            <person name="Jagels K."/>
            <person name="James K.D."/>
            <person name="Lennard N."/>
            <person name="Line A."/>
            <person name="Mayes R."/>
            <person name="Moule S."/>
            <person name="Mungall K."/>
            <person name="Ormond D."/>
            <person name="Quail M.A."/>
            <person name="Rabbinowitsch E."/>
            <person name="Rutherford K.M."/>
            <person name="Sanders M."/>
            <person name="Sharp S."/>
            <person name="Simmonds M."/>
            <person name="Stevens K."/>
            <person name="Whitehead S."/>
            <person name="Barrell B.G."/>
            <person name="Spratt B.G."/>
            <person name="Parkhill J."/>
        </authorList>
    </citation>
    <scope>NUCLEOTIDE SEQUENCE [LARGE SCALE GENOMIC DNA]</scope>
    <source>
        <strain>MRSA252</strain>
    </source>
</reference>
<comment type="catalytic activity">
    <reaction evidence="1">
        <text>D-mannitol 1-phosphate + NAD(+) = beta-D-fructose 6-phosphate + NADH + H(+)</text>
        <dbReference type="Rhea" id="RHEA:19661"/>
        <dbReference type="ChEBI" id="CHEBI:15378"/>
        <dbReference type="ChEBI" id="CHEBI:57540"/>
        <dbReference type="ChEBI" id="CHEBI:57634"/>
        <dbReference type="ChEBI" id="CHEBI:57945"/>
        <dbReference type="ChEBI" id="CHEBI:61381"/>
        <dbReference type="EC" id="1.1.1.17"/>
    </reaction>
</comment>
<comment type="similarity">
    <text evidence="1">Belongs to the mannitol dehydrogenase family.</text>
</comment>
<protein>
    <recommendedName>
        <fullName evidence="1">Mannitol-1-phosphate 5-dehydrogenase</fullName>
        <ecNumber evidence="1">1.1.1.17</ecNumber>
    </recommendedName>
</protein>
<organism>
    <name type="scientific">Staphylococcus aureus (strain MRSA252)</name>
    <dbReference type="NCBI Taxonomy" id="282458"/>
    <lineage>
        <taxon>Bacteria</taxon>
        <taxon>Bacillati</taxon>
        <taxon>Bacillota</taxon>
        <taxon>Bacilli</taxon>
        <taxon>Bacillales</taxon>
        <taxon>Staphylococcaceae</taxon>
        <taxon>Staphylococcus</taxon>
    </lineage>
</organism>
<evidence type="ECO:0000255" key="1">
    <source>
        <dbReference type="HAMAP-Rule" id="MF_00196"/>
    </source>
</evidence>
<gene>
    <name evidence="1" type="primary">mtlD</name>
    <name type="ordered locus">SAR2247</name>
</gene>
<accession>Q6GER8</accession>